<sequence length="399" mass="41080">MNDTVREPAGGLGVNHGPALSVVLAGGGTAGHVEPAMAVADALSVLEPNVRITALGTSRGLETRLVPARGYHLELITPVPLPRKPSGDLARLPPRVWRSVRETRAVLDLVDADVVIGFGGYVALPAYLAARGIPGLRRRIPVVIHEANARAGLANRVGLRTADRVLSAVPDSGLRGAEVVGVPVRAAITALDRMALRAEARAHFGFADDARVLLVFGGSQGAVSLNKAVSAAAAELAASGVSVLHAHGPKNVLELLAPRTPDQDDPPYVAVPYLDRMDLAYAAADLVICRSGAMTVAEVSAVGLPAIYVPLPIGNGEQRLNALPVVNAGGGMVVADADLTPALVAREVTGLLTDPPRLAAMTAAAAQVGHRDAAAQVAQAALDIARLAPSRRRAVGGRR</sequence>
<evidence type="ECO:0000255" key="1">
    <source>
        <dbReference type="HAMAP-Rule" id="MF_00033"/>
    </source>
</evidence>
<organism>
    <name type="scientific">Mycobacterium ulcerans (strain Agy99)</name>
    <dbReference type="NCBI Taxonomy" id="362242"/>
    <lineage>
        <taxon>Bacteria</taxon>
        <taxon>Bacillati</taxon>
        <taxon>Actinomycetota</taxon>
        <taxon>Actinomycetes</taxon>
        <taxon>Mycobacteriales</taxon>
        <taxon>Mycobacteriaceae</taxon>
        <taxon>Mycobacterium</taxon>
        <taxon>Mycobacterium ulcerans group</taxon>
    </lineage>
</organism>
<dbReference type="EC" id="2.4.1.227" evidence="1"/>
<dbReference type="EMBL" id="CP000325">
    <property type="protein sequence ID" value="ABL05656.1"/>
    <property type="molecule type" value="Genomic_DNA"/>
</dbReference>
<dbReference type="RefSeq" id="WP_011741262.1">
    <property type="nucleotide sequence ID" value="NC_008611.1"/>
</dbReference>
<dbReference type="SMR" id="A0PTI7"/>
<dbReference type="CAZy" id="GT28">
    <property type="family name" value="Glycosyltransferase Family 28"/>
</dbReference>
<dbReference type="KEGG" id="mul:MUL_3501"/>
<dbReference type="eggNOG" id="COG0707">
    <property type="taxonomic scope" value="Bacteria"/>
</dbReference>
<dbReference type="HOGENOM" id="CLU_037404_1_0_11"/>
<dbReference type="UniPathway" id="UPA00219"/>
<dbReference type="Proteomes" id="UP000000765">
    <property type="component" value="Chromosome"/>
</dbReference>
<dbReference type="GO" id="GO:0005886">
    <property type="term" value="C:plasma membrane"/>
    <property type="evidence" value="ECO:0007669"/>
    <property type="project" value="UniProtKB-SubCell"/>
</dbReference>
<dbReference type="GO" id="GO:0051991">
    <property type="term" value="F:UDP-N-acetyl-D-glucosamine:N-acetylmuramoyl-L-alanyl-D-glutamyl-meso-2,6-diaminopimelyl-D-alanyl-D-alanine-diphosphoundecaprenol 4-beta-N-acetylglucosaminlytransferase activity"/>
    <property type="evidence" value="ECO:0007669"/>
    <property type="project" value="RHEA"/>
</dbReference>
<dbReference type="GO" id="GO:0050511">
    <property type="term" value="F:undecaprenyldiphospho-muramoylpentapeptide beta-N-acetylglucosaminyltransferase activity"/>
    <property type="evidence" value="ECO:0007669"/>
    <property type="project" value="UniProtKB-UniRule"/>
</dbReference>
<dbReference type="GO" id="GO:0005975">
    <property type="term" value="P:carbohydrate metabolic process"/>
    <property type="evidence" value="ECO:0007669"/>
    <property type="project" value="InterPro"/>
</dbReference>
<dbReference type="GO" id="GO:0051301">
    <property type="term" value="P:cell division"/>
    <property type="evidence" value="ECO:0007669"/>
    <property type="project" value="UniProtKB-KW"/>
</dbReference>
<dbReference type="GO" id="GO:0071555">
    <property type="term" value="P:cell wall organization"/>
    <property type="evidence" value="ECO:0007669"/>
    <property type="project" value="UniProtKB-KW"/>
</dbReference>
<dbReference type="GO" id="GO:0030259">
    <property type="term" value="P:lipid glycosylation"/>
    <property type="evidence" value="ECO:0007669"/>
    <property type="project" value="UniProtKB-UniRule"/>
</dbReference>
<dbReference type="GO" id="GO:0009252">
    <property type="term" value="P:peptidoglycan biosynthetic process"/>
    <property type="evidence" value="ECO:0007669"/>
    <property type="project" value="UniProtKB-UniRule"/>
</dbReference>
<dbReference type="GO" id="GO:0008360">
    <property type="term" value="P:regulation of cell shape"/>
    <property type="evidence" value="ECO:0007669"/>
    <property type="project" value="UniProtKB-KW"/>
</dbReference>
<dbReference type="CDD" id="cd03785">
    <property type="entry name" value="GT28_MurG"/>
    <property type="match status" value="1"/>
</dbReference>
<dbReference type="Gene3D" id="3.40.50.2000">
    <property type="entry name" value="Glycogen Phosphorylase B"/>
    <property type="match status" value="2"/>
</dbReference>
<dbReference type="HAMAP" id="MF_00033">
    <property type="entry name" value="MurG"/>
    <property type="match status" value="1"/>
</dbReference>
<dbReference type="InterPro" id="IPR006009">
    <property type="entry name" value="GlcNAc_MurG"/>
</dbReference>
<dbReference type="InterPro" id="IPR007235">
    <property type="entry name" value="Glyco_trans_28_C"/>
</dbReference>
<dbReference type="InterPro" id="IPR004276">
    <property type="entry name" value="GlycoTrans_28_N"/>
</dbReference>
<dbReference type="NCBIfam" id="TIGR01133">
    <property type="entry name" value="murG"/>
    <property type="match status" value="1"/>
</dbReference>
<dbReference type="PANTHER" id="PTHR21015:SF22">
    <property type="entry name" value="GLYCOSYLTRANSFERASE"/>
    <property type="match status" value="1"/>
</dbReference>
<dbReference type="PANTHER" id="PTHR21015">
    <property type="entry name" value="UDP-N-ACETYLGLUCOSAMINE--N-ACETYLMURAMYL-(PENTAPEPTIDE) PYROPHOSPHORYL-UNDECAPRENOL N-ACETYLGLUCOSAMINE TRANSFERASE 1"/>
    <property type="match status" value="1"/>
</dbReference>
<dbReference type="Pfam" id="PF04101">
    <property type="entry name" value="Glyco_tran_28_C"/>
    <property type="match status" value="1"/>
</dbReference>
<dbReference type="Pfam" id="PF03033">
    <property type="entry name" value="Glyco_transf_28"/>
    <property type="match status" value="1"/>
</dbReference>
<dbReference type="SUPFAM" id="SSF53756">
    <property type="entry name" value="UDP-Glycosyltransferase/glycogen phosphorylase"/>
    <property type="match status" value="1"/>
</dbReference>
<proteinExistence type="inferred from homology"/>
<keyword id="KW-0131">Cell cycle</keyword>
<keyword id="KW-0132">Cell division</keyword>
<keyword id="KW-1003">Cell membrane</keyword>
<keyword id="KW-0133">Cell shape</keyword>
<keyword id="KW-0961">Cell wall biogenesis/degradation</keyword>
<keyword id="KW-0328">Glycosyltransferase</keyword>
<keyword id="KW-0472">Membrane</keyword>
<keyword id="KW-0573">Peptidoglycan synthesis</keyword>
<keyword id="KW-0808">Transferase</keyword>
<feature type="chain" id="PRO_1000002672" description="UDP-N-acetylglucosamine--N-acetylmuramyl-(pentapeptide) pyrophosphoryl-undecaprenol N-acetylglucosamine transferase">
    <location>
        <begin position="1"/>
        <end position="399"/>
    </location>
</feature>
<feature type="binding site" evidence="1">
    <location>
        <begin position="29"/>
        <end position="31"/>
    </location>
    <ligand>
        <name>UDP-N-acetyl-alpha-D-glucosamine</name>
        <dbReference type="ChEBI" id="CHEBI:57705"/>
    </ligand>
</feature>
<feature type="binding site" evidence="1">
    <location>
        <position position="148"/>
    </location>
    <ligand>
        <name>UDP-N-acetyl-alpha-D-glucosamine</name>
        <dbReference type="ChEBI" id="CHEBI:57705"/>
    </ligand>
</feature>
<feature type="binding site" evidence="1">
    <location>
        <position position="185"/>
    </location>
    <ligand>
        <name>UDP-N-acetyl-alpha-D-glucosamine</name>
        <dbReference type="ChEBI" id="CHEBI:57705"/>
    </ligand>
</feature>
<feature type="binding site" evidence="1">
    <location>
        <position position="219"/>
    </location>
    <ligand>
        <name>UDP-N-acetyl-alpha-D-glucosamine</name>
        <dbReference type="ChEBI" id="CHEBI:57705"/>
    </ligand>
</feature>
<feature type="binding site" evidence="1">
    <location>
        <position position="318"/>
    </location>
    <ligand>
        <name>UDP-N-acetyl-alpha-D-glucosamine</name>
        <dbReference type="ChEBI" id="CHEBI:57705"/>
    </ligand>
</feature>
<accession>A0PTI7</accession>
<protein>
    <recommendedName>
        <fullName evidence="1">UDP-N-acetylglucosamine--N-acetylmuramyl-(pentapeptide) pyrophosphoryl-undecaprenol N-acetylglucosamine transferase</fullName>
        <ecNumber evidence="1">2.4.1.227</ecNumber>
    </recommendedName>
    <alternativeName>
        <fullName evidence="1">Undecaprenyl-PP-MurNAc-pentapeptide-UDPGlcNAc GlcNAc transferase</fullName>
    </alternativeName>
</protein>
<gene>
    <name evidence="1" type="primary">murG</name>
    <name type="ordered locus">MUL_3501</name>
</gene>
<name>MURG_MYCUA</name>
<reference key="1">
    <citation type="journal article" date="2007" name="Genome Res.">
        <title>Reductive evolution and niche adaptation inferred from the genome of Mycobacterium ulcerans, the causative agent of Buruli ulcer.</title>
        <authorList>
            <person name="Stinear T.P."/>
            <person name="Seemann T."/>
            <person name="Pidot S."/>
            <person name="Frigui W."/>
            <person name="Reysset G."/>
            <person name="Garnier T."/>
            <person name="Meurice G."/>
            <person name="Simon D."/>
            <person name="Bouchier C."/>
            <person name="Ma L."/>
            <person name="Tichit M."/>
            <person name="Porter J.L."/>
            <person name="Ryan J."/>
            <person name="Johnson P.D.R."/>
            <person name="Davies J.K."/>
            <person name="Jenkin G.A."/>
            <person name="Small P.L.C."/>
            <person name="Jones L.M."/>
            <person name="Tekaia F."/>
            <person name="Laval F."/>
            <person name="Daffe M."/>
            <person name="Parkhill J."/>
            <person name="Cole S.T."/>
        </authorList>
    </citation>
    <scope>NUCLEOTIDE SEQUENCE [LARGE SCALE GENOMIC DNA]</scope>
    <source>
        <strain>Agy99</strain>
    </source>
</reference>
<comment type="function">
    <text evidence="1">Cell wall formation. Catalyzes the transfer of a GlcNAc subunit on undecaprenyl-pyrophosphoryl-MurNAc-pentapeptide (lipid intermediate I) to form undecaprenyl-pyrophosphoryl-MurNAc-(pentapeptide)GlcNAc (lipid intermediate II).</text>
</comment>
<comment type="catalytic activity">
    <reaction evidence="1">
        <text>di-trans,octa-cis-undecaprenyl diphospho-N-acetyl-alpha-D-muramoyl-L-alanyl-D-glutamyl-meso-2,6-diaminopimeloyl-D-alanyl-D-alanine + UDP-N-acetyl-alpha-D-glucosamine = di-trans,octa-cis-undecaprenyl diphospho-[N-acetyl-alpha-D-glucosaminyl-(1-&gt;4)]-N-acetyl-alpha-D-muramoyl-L-alanyl-D-glutamyl-meso-2,6-diaminopimeloyl-D-alanyl-D-alanine + UDP + H(+)</text>
        <dbReference type="Rhea" id="RHEA:31227"/>
        <dbReference type="ChEBI" id="CHEBI:15378"/>
        <dbReference type="ChEBI" id="CHEBI:57705"/>
        <dbReference type="ChEBI" id="CHEBI:58223"/>
        <dbReference type="ChEBI" id="CHEBI:61387"/>
        <dbReference type="ChEBI" id="CHEBI:61388"/>
        <dbReference type="EC" id="2.4.1.227"/>
    </reaction>
</comment>
<comment type="pathway">
    <text evidence="1">Cell wall biogenesis; peptidoglycan biosynthesis.</text>
</comment>
<comment type="subcellular location">
    <subcellularLocation>
        <location evidence="1">Cell membrane</location>
        <topology evidence="1">Peripheral membrane protein</topology>
        <orientation evidence="1">Cytoplasmic side</orientation>
    </subcellularLocation>
</comment>
<comment type="similarity">
    <text evidence="1">Belongs to the glycosyltransferase 28 family. MurG subfamily.</text>
</comment>